<gene>
    <name type="primary">GPM6A</name>
</gene>
<reference key="1">
    <citation type="submission" date="2004-11" db="EMBL/GenBank/DDBJ databases">
        <authorList>
            <consortium name="The German cDNA consortium"/>
        </authorList>
    </citation>
    <scope>NUCLEOTIDE SEQUENCE [LARGE SCALE MRNA] (ISOFORMS 1 AND 2)</scope>
    <source>
        <tissue>Brain cortex</tissue>
    </source>
</reference>
<name>GPM6A_PONAB</name>
<feature type="chain" id="PRO_0000159020" description="Neuronal membrane glycoprotein M6-a">
    <location>
        <begin position="1"/>
        <end position="278"/>
    </location>
</feature>
<feature type="topological domain" description="Cytoplasmic" evidence="5">
    <location>
        <begin position="1"/>
        <end position="22"/>
    </location>
</feature>
<feature type="transmembrane region" description="Helical" evidence="5">
    <location>
        <begin position="23"/>
        <end position="43"/>
    </location>
</feature>
<feature type="topological domain" description="Extracellular" evidence="5">
    <location>
        <begin position="44"/>
        <end position="84"/>
    </location>
</feature>
<feature type="transmembrane region" description="Helical" evidence="5">
    <location>
        <begin position="85"/>
        <end position="105"/>
    </location>
</feature>
<feature type="topological domain" description="Cytoplasmic" evidence="5">
    <location>
        <begin position="106"/>
        <end position="127"/>
    </location>
</feature>
<feature type="transmembrane region" description="Helical" evidence="5">
    <location>
        <begin position="128"/>
        <end position="148"/>
    </location>
</feature>
<feature type="topological domain" description="Extracellular" evidence="1">
    <location>
        <begin position="149"/>
        <end position="213"/>
    </location>
</feature>
<feature type="transmembrane region" description="Helical" evidence="5">
    <location>
        <begin position="214"/>
        <end position="234"/>
    </location>
</feature>
<feature type="topological domain" description="Cytoplasmic" evidence="5">
    <location>
        <begin position="235"/>
        <end position="278"/>
    </location>
</feature>
<feature type="modified residue" description="N-acetylmethionine" evidence="3">
    <location>
        <position position="1"/>
    </location>
</feature>
<feature type="modified residue" description="Phosphoserine" evidence="2">
    <location>
        <position position="256"/>
    </location>
</feature>
<feature type="modified residue" description="Phosphothreonine" evidence="4">
    <location>
        <position position="278"/>
    </location>
</feature>
<feature type="glycosylation site" description="N-linked (GlcNAc...) asparagine" evidence="5">
    <location>
        <position position="164"/>
    </location>
</feature>
<feature type="glycosylation site" description="N-linked (GlcNAc...) asparagine" evidence="5">
    <location>
        <position position="208"/>
    </location>
</feature>
<feature type="disulfide bond" evidence="1">
    <location>
        <begin position="174"/>
        <end position="192"/>
    </location>
</feature>
<feature type="splice variant" id="VSP_016538" description="In isoform 2." evidence="6">
    <original>MEENMEEGQTQK</original>
    <variation>M</variation>
    <location>
        <begin position="1"/>
        <end position="12"/>
    </location>
</feature>
<feature type="sequence conflict" description="In Ref. 1; CAH92594." evidence="7" ref="1">
    <original>F</original>
    <variation>L</variation>
    <location>
        <position position="81"/>
    </location>
</feature>
<feature type="sequence conflict" description="In Ref. 1; CAH92594." evidence="7" ref="1">
    <original>M</original>
    <variation>T</variation>
    <location>
        <position position="154"/>
    </location>
</feature>
<feature type="sequence conflict" description="In Ref. 1; CAH93453." evidence="7" ref="1">
    <original>T</original>
    <variation>P</variation>
    <location>
        <position position="165"/>
    </location>
</feature>
<feature type="sequence conflict" description="In Ref. 1; CAH93453." evidence="7" ref="1">
    <original>E</original>
    <variation>G</variation>
    <location>
        <position position="272"/>
    </location>
</feature>
<comment type="function">
    <text evidence="1">Involved in neuronal differentiation, including differentiation and migration of neuronal stem cells. Plays a role in neuronal plasticity and is involved in neurite and filopodia outgrowth, filopodia motility and probably synapse formation. GPM6A-induced filopodia formation involves mitogen-activated protein kinase (MAPK) and Src signaling pathways. May be involved in neuronal NGF-dependent Ca(2+) influx. May be involved in regulation of endocytosis and intracellular trafficking of G-protein-coupled receptors (GPCRs); enhances internalization and recycling of mu-type opioid receptor (By similarity).</text>
</comment>
<comment type="subunit">
    <text evidence="3 4">Interacts with OPRM1 (By similarity). Interacts with palmitoyltransferase ZDHHC17/HIP14; the interaction leads to palmitoylation of GPM6A (By similarity).</text>
</comment>
<comment type="subcellular location">
    <subcellularLocation>
        <location evidence="2">Cell membrane</location>
        <topology evidence="2">Multi-pass membrane protein</topology>
    </subcellularLocation>
    <subcellularLocation>
        <location evidence="2">Cell projection</location>
        <location evidence="2">Axon</location>
    </subcellularLocation>
    <subcellularLocation>
        <location evidence="2">Cell projection</location>
        <location evidence="2">Growth cone</location>
    </subcellularLocation>
    <subcellularLocation>
        <location evidence="4">Cell projection</location>
        <location evidence="4">Dendritic spine</location>
    </subcellularLocation>
    <subcellularLocation>
        <location evidence="4">Cell projection</location>
        <location evidence="4">Filopodium</location>
    </subcellularLocation>
    <subcellularLocation>
        <location evidence="4">Cell projection</location>
        <location evidence="4">Neuron projection</location>
    </subcellularLocation>
    <text evidence="2 4">Localizes to cholesterol-rich lipid rafts of the plasma membrane of hippocampal neurons. Localized to plasma membrane of cell bodies and neurites of hippocampal neurons. Localized in membrane protrusions (filopodia and spines) of primary hippocampal neurons (By similarity). Localized to the growth cone edge membrane of elongating axons (By similarity).</text>
</comment>
<comment type="alternative products">
    <event type="alternative splicing"/>
    <isoform>
        <id>Q5R9Q3-1</id>
        <name>1</name>
        <sequence type="displayed"/>
    </isoform>
    <isoform>
        <id>Q5R9Q3-2</id>
        <name>2</name>
        <sequence type="described" ref="VSP_016538"/>
    </isoform>
</comment>
<comment type="PTM">
    <text evidence="3">N-glycosylated.</text>
</comment>
<comment type="PTM">
    <text evidence="3">Palmitoylated by ZDHHC17/HIP14.</text>
</comment>
<comment type="similarity">
    <text evidence="7">Belongs to the myelin proteolipid protein family.</text>
</comment>
<dbReference type="EMBL" id="CR857883">
    <property type="protein sequence ID" value="CAH90136.1"/>
    <property type="molecule type" value="mRNA"/>
</dbReference>
<dbReference type="EMBL" id="CR858982">
    <property type="protein sequence ID" value="CAH91177.1"/>
    <property type="molecule type" value="mRNA"/>
</dbReference>
<dbReference type="EMBL" id="CR859330">
    <property type="protein sequence ID" value="CAH91507.1"/>
    <property type="molecule type" value="mRNA"/>
</dbReference>
<dbReference type="EMBL" id="CR860472">
    <property type="protein sequence ID" value="CAH92594.1"/>
    <property type="molecule type" value="mRNA"/>
</dbReference>
<dbReference type="EMBL" id="CR861395">
    <property type="protein sequence ID" value="CAH93453.1"/>
    <property type="molecule type" value="mRNA"/>
</dbReference>
<dbReference type="RefSeq" id="NP_001125689.1">
    <molecule id="Q5R9Q3-1"/>
    <property type="nucleotide sequence ID" value="NM_001132217.2"/>
</dbReference>
<dbReference type="RefSeq" id="NP_001128932.1">
    <molecule id="Q5R9Q3-2"/>
    <property type="nucleotide sequence ID" value="NM_001135460.2"/>
</dbReference>
<dbReference type="FunCoup" id="Q5R9Q3">
    <property type="interactions" value="580"/>
</dbReference>
<dbReference type="STRING" id="9601.ENSPPYP00000016996"/>
<dbReference type="GlyCosmos" id="Q5R9Q3">
    <property type="glycosylation" value="2 sites, No reported glycans"/>
</dbReference>
<dbReference type="Ensembl" id="ENSPPYT00000017685.3">
    <molecule id="Q5R9Q3-2"/>
    <property type="protein sequence ID" value="ENSPPYP00000016996.3"/>
    <property type="gene ID" value="ENSPPYG00000015214.3"/>
</dbReference>
<dbReference type="Ensembl" id="ENSPPYT00000046194.1">
    <molecule id="Q5R9Q3-1"/>
    <property type="protein sequence ID" value="ENSPPYP00000039649.1"/>
    <property type="gene ID" value="ENSPPYG00000015214.3"/>
</dbReference>
<dbReference type="GeneID" id="100172611"/>
<dbReference type="KEGG" id="pon:100172611"/>
<dbReference type="CTD" id="2823"/>
<dbReference type="eggNOG" id="KOG4800">
    <property type="taxonomic scope" value="Eukaryota"/>
</dbReference>
<dbReference type="GeneTree" id="ENSGT00390000006915"/>
<dbReference type="HOGENOM" id="CLU_064167_2_0_1"/>
<dbReference type="InParanoid" id="Q5R9Q3"/>
<dbReference type="OMA" id="CTLNENF"/>
<dbReference type="OrthoDB" id="9993736at2759"/>
<dbReference type="Proteomes" id="UP000001595">
    <property type="component" value="Chromosome 4"/>
</dbReference>
<dbReference type="GO" id="GO:0044295">
    <property type="term" value="C:axonal growth cone"/>
    <property type="evidence" value="ECO:0000250"/>
    <property type="project" value="UniProtKB"/>
</dbReference>
<dbReference type="GO" id="GO:0043197">
    <property type="term" value="C:dendritic spine"/>
    <property type="evidence" value="ECO:0007669"/>
    <property type="project" value="UniProtKB-SubCell"/>
</dbReference>
<dbReference type="GO" id="GO:0030175">
    <property type="term" value="C:filopodium"/>
    <property type="evidence" value="ECO:0000250"/>
    <property type="project" value="UniProtKB"/>
</dbReference>
<dbReference type="GO" id="GO:0043005">
    <property type="term" value="C:neuron projection"/>
    <property type="evidence" value="ECO:0000250"/>
    <property type="project" value="UniProtKB"/>
</dbReference>
<dbReference type="GO" id="GO:0043025">
    <property type="term" value="C:neuronal cell body"/>
    <property type="evidence" value="ECO:0000250"/>
    <property type="project" value="UniProtKB"/>
</dbReference>
<dbReference type="GO" id="GO:0005886">
    <property type="term" value="C:plasma membrane"/>
    <property type="evidence" value="ECO:0000250"/>
    <property type="project" value="UniProtKB"/>
</dbReference>
<dbReference type="GO" id="GO:0003407">
    <property type="term" value="P:neural retina development"/>
    <property type="evidence" value="ECO:0000250"/>
    <property type="project" value="UniProtKB"/>
</dbReference>
<dbReference type="GO" id="GO:0001764">
    <property type="term" value="P:neuron migration"/>
    <property type="evidence" value="ECO:0000250"/>
    <property type="project" value="UniProtKB"/>
</dbReference>
<dbReference type="GO" id="GO:0048812">
    <property type="term" value="P:neuron projection morphogenesis"/>
    <property type="evidence" value="ECO:0000250"/>
    <property type="project" value="UniProtKB"/>
</dbReference>
<dbReference type="GO" id="GO:0051491">
    <property type="term" value="P:positive regulation of filopodium assembly"/>
    <property type="evidence" value="ECO:0000250"/>
    <property type="project" value="UniProtKB"/>
</dbReference>
<dbReference type="GO" id="GO:0009617">
    <property type="term" value="P:response to bacterium"/>
    <property type="evidence" value="ECO:0007669"/>
    <property type="project" value="Ensembl"/>
</dbReference>
<dbReference type="GO" id="GO:0048863">
    <property type="term" value="P:stem cell differentiation"/>
    <property type="evidence" value="ECO:0000250"/>
    <property type="project" value="UniProtKB"/>
</dbReference>
<dbReference type="GO" id="GO:0007416">
    <property type="term" value="P:synapse assembly"/>
    <property type="evidence" value="ECO:0000250"/>
    <property type="project" value="UniProtKB"/>
</dbReference>
<dbReference type="InterPro" id="IPR001614">
    <property type="entry name" value="Myelin_PLP"/>
</dbReference>
<dbReference type="InterPro" id="IPR018237">
    <property type="entry name" value="Myelin_PLP_CS"/>
</dbReference>
<dbReference type="PANTHER" id="PTHR11683">
    <property type="entry name" value="MYELIN PROTEOLIPID"/>
    <property type="match status" value="1"/>
</dbReference>
<dbReference type="PANTHER" id="PTHR11683:SF4">
    <property type="entry name" value="NEURONAL MEMBRANE GLYCOPROTEIN M6-A"/>
    <property type="match status" value="1"/>
</dbReference>
<dbReference type="Pfam" id="PF01275">
    <property type="entry name" value="Myelin_PLP"/>
    <property type="match status" value="1"/>
</dbReference>
<dbReference type="PRINTS" id="PR00214">
    <property type="entry name" value="MYELINPLP"/>
</dbReference>
<dbReference type="SMART" id="SM00002">
    <property type="entry name" value="PLP"/>
    <property type="match status" value="1"/>
</dbReference>
<dbReference type="PROSITE" id="PS00575">
    <property type="entry name" value="MYELIN_PLP_1"/>
    <property type="match status" value="1"/>
</dbReference>
<dbReference type="PROSITE" id="PS01004">
    <property type="entry name" value="MYELIN_PLP_2"/>
    <property type="match status" value="1"/>
</dbReference>
<proteinExistence type="evidence at transcript level"/>
<evidence type="ECO:0000250" key="1"/>
<evidence type="ECO:0000250" key="2">
    <source>
        <dbReference type="UniProtKB" id="P35802"/>
    </source>
</evidence>
<evidence type="ECO:0000250" key="3">
    <source>
        <dbReference type="UniProtKB" id="P51674"/>
    </source>
</evidence>
<evidence type="ECO:0000250" key="4">
    <source>
        <dbReference type="UniProtKB" id="Q812E9"/>
    </source>
</evidence>
<evidence type="ECO:0000255" key="5"/>
<evidence type="ECO:0000303" key="6">
    <source ref="1"/>
</evidence>
<evidence type="ECO:0000305" key="7"/>
<accession>Q5R9Q3</accession>
<accession>Q5R463</accession>
<accession>Q5R6L6</accession>
<accession>Q5RDM1</accession>
<organism>
    <name type="scientific">Pongo abelii</name>
    <name type="common">Sumatran orangutan</name>
    <name type="synonym">Pongo pygmaeus abelii</name>
    <dbReference type="NCBI Taxonomy" id="9601"/>
    <lineage>
        <taxon>Eukaryota</taxon>
        <taxon>Metazoa</taxon>
        <taxon>Chordata</taxon>
        <taxon>Craniata</taxon>
        <taxon>Vertebrata</taxon>
        <taxon>Euteleostomi</taxon>
        <taxon>Mammalia</taxon>
        <taxon>Eutheria</taxon>
        <taxon>Euarchontoglires</taxon>
        <taxon>Primates</taxon>
        <taxon>Haplorrhini</taxon>
        <taxon>Catarrhini</taxon>
        <taxon>Hominidae</taxon>
        <taxon>Pongo</taxon>
    </lineage>
</organism>
<sequence length="278" mass="31210">MEENMEEGQTQKGCFECCIKCLGGIPYASLIATILLYAGVALFCGCGHEALSGTVNILQTYFEMARTAGDTLDVFTMIDIFKYVIYGIAAAFFVYGILLMVEGFFTTGAIKDLYGDFKITTCGRCVSAWFIMLTYLFMLAWLGVTAFTSLPVYMYFNLWTICRNTTLVEGANLCLDLRQFGIVTIGEEKKICTVSENFLRMCESTELNMTFHLFIVALAGAGAAVIAMVHYLMVLSANWAYVKDACRMQKYEDIKSKEEQELHDIHSTRSKERLNAYT</sequence>
<protein>
    <recommendedName>
        <fullName>Neuronal membrane glycoprotein M6-a</fullName>
        <shortName>M6a</shortName>
    </recommendedName>
</protein>
<keyword id="KW-0007">Acetylation</keyword>
<keyword id="KW-0025">Alternative splicing</keyword>
<keyword id="KW-1003">Cell membrane</keyword>
<keyword id="KW-0966">Cell projection</keyword>
<keyword id="KW-1015">Disulfide bond</keyword>
<keyword id="KW-0325">Glycoprotein</keyword>
<keyword id="KW-0449">Lipoprotein</keyword>
<keyword id="KW-0472">Membrane</keyword>
<keyword id="KW-0524">Neurogenesis</keyword>
<keyword id="KW-0564">Palmitate</keyword>
<keyword id="KW-0597">Phosphoprotein</keyword>
<keyword id="KW-1185">Reference proteome</keyword>
<keyword id="KW-0770">Synapse</keyword>
<keyword id="KW-0812">Transmembrane</keyword>
<keyword id="KW-1133">Transmembrane helix</keyword>